<accession>Q62HE6</accession>
<gene>
    <name evidence="1" type="primary">miaA</name>
    <name type="ordered locus">BMA2315</name>
</gene>
<keyword id="KW-0067">ATP-binding</keyword>
<keyword id="KW-0460">Magnesium</keyword>
<keyword id="KW-0547">Nucleotide-binding</keyword>
<keyword id="KW-1185">Reference proteome</keyword>
<keyword id="KW-0808">Transferase</keyword>
<keyword id="KW-0819">tRNA processing</keyword>
<name>MIAA_BURMA</name>
<feature type="chain" id="PRO_0000163892" description="tRNA dimethylallyltransferase">
    <location>
        <begin position="1"/>
        <end position="324"/>
    </location>
</feature>
<feature type="region of interest" description="Interaction with substrate tRNA" evidence="1">
    <location>
        <begin position="42"/>
        <end position="45"/>
    </location>
</feature>
<feature type="region of interest" description="Interaction with substrate tRNA" evidence="1">
    <location>
        <begin position="166"/>
        <end position="170"/>
    </location>
</feature>
<feature type="region of interest" description="Interaction with substrate tRNA" evidence="1">
    <location>
        <begin position="251"/>
        <end position="256"/>
    </location>
</feature>
<feature type="binding site" evidence="1">
    <location>
        <begin position="17"/>
        <end position="24"/>
    </location>
    <ligand>
        <name>ATP</name>
        <dbReference type="ChEBI" id="CHEBI:30616"/>
    </ligand>
</feature>
<feature type="binding site" evidence="1">
    <location>
        <begin position="19"/>
        <end position="24"/>
    </location>
    <ligand>
        <name>substrate</name>
    </ligand>
</feature>
<feature type="site" description="Interaction with substrate tRNA" evidence="1">
    <location>
        <position position="108"/>
    </location>
</feature>
<feature type="site" description="Interaction with substrate tRNA" evidence="1">
    <location>
        <position position="130"/>
    </location>
</feature>
<proteinExistence type="inferred from homology"/>
<evidence type="ECO:0000255" key="1">
    <source>
        <dbReference type="HAMAP-Rule" id="MF_00185"/>
    </source>
</evidence>
<sequence length="324" mass="35095">MSERNAASARTVACLLGPTASGKTAAALALAARRPIEIVSVDSALVYRGMDIGTAKPTRDERAAVPHHLIDIVDPADAYSAAEFRADALRLVAQIAARGRTPLLAGGTMLYYRALTQGLNDLPAADPDVRATLDADAARDGWPALHARLAGIDPATAARLAPNDSQRIQRALEVYLLTGQPMSALLAAPPRDNDAAAGLRFVPVALEPSERAVLHARIAARFDAMLEAGFIDEVERLRRRDDLHLGLPSMRCVGYRQAWEYLDGCTDYRTMRDKGIFATRQLCKRQLTWLRAMPERIVVDCCAPDATVRAVDALERVLDGRAPA</sequence>
<dbReference type="EC" id="2.5.1.75" evidence="1"/>
<dbReference type="EMBL" id="CP000010">
    <property type="protein sequence ID" value="AAU49801.1"/>
    <property type="molecule type" value="Genomic_DNA"/>
</dbReference>
<dbReference type="RefSeq" id="WP_004194103.1">
    <property type="nucleotide sequence ID" value="NC_006348.1"/>
</dbReference>
<dbReference type="RefSeq" id="YP_103874.1">
    <property type="nucleotide sequence ID" value="NC_006348.1"/>
</dbReference>
<dbReference type="SMR" id="Q62HE6"/>
<dbReference type="GeneID" id="92980007"/>
<dbReference type="KEGG" id="bma:BMA2315"/>
<dbReference type="PATRIC" id="fig|243160.12.peg.2381"/>
<dbReference type="eggNOG" id="COG0324">
    <property type="taxonomic scope" value="Bacteria"/>
</dbReference>
<dbReference type="HOGENOM" id="CLU_032616_0_0_4"/>
<dbReference type="Proteomes" id="UP000006693">
    <property type="component" value="Chromosome 1"/>
</dbReference>
<dbReference type="GO" id="GO:0005524">
    <property type="term" value="F:ATP binding"/>
    <property type="evidence" value="ECO:0007669"/>
    <property type="project" value="UniProtKB-UniRule"/>
</dbReference>
<dbReference type="GO" id="GO:0052381">
    <property type="term" value="F:tRNA dimethylallyltransferase activity"/>
    <property type="evidence" value="ECO:0007669"/>
    <property type="project" value="UniProtKB-UniRule"/>
</dbReference>
<dbReference type="GO" id="GO:0006400">
    <property type="term" value="P:tRNA modification"/>
    <property type="evidence" value="ECO:0007669"/>
    <property type="project" value="TreeGrafter"/>
</dbReference>
<dbReference type="FunFam" id="1.10.20.140:FF:000001">
    <property type="entry name" value="tRNA dimethylallyltransferase"/>
    <property type="match status" value="1"/>
</dbReference>
<dbReference type="Gene3D" id="1.10.20.140">
    <property type="match status" value="1"/>
</dbReference>
<dbReference type="Gene3D" id="3.40.50.300">
    <property type="entry name" value="P-loop containing nucleotide triphosphate hydrolases"/>
    <property type="match status" value="1"/>
</dbReference>
<dbReference type="HAMAP" id="MF_00185">
    <property type="entry name" value="IPP_trans"/>
    <property type="match status" value="1"/>
</dbReference>
<dbReference type="InterPro" id="IPR039657">
    <property type="entry name" value="Dimethylallyltransferase"/>
</dbReference>
<dbReference type="InterPro" id="IPR018022">
    <property type="entry name" value="IPT"/>
</dbReference>
<dbReference type="InterPro" id="IPR027417">
    <property type="entry name" value="P-loop_NTPase"/>
</dbReference>
<dbReference type="NCBIfam" id="TIGR00174">
    <property type="entry name" value="miaA"/>
    <property type="match status" value="1"/>
</dbReference>
<dbReference type="PANTHER" id="PTHR11088">
    <property type="entry name" value="TRNA DIMETHYLALLYLTRANSFERASE"/>
    <property type="match status" value="1"/>
</dbReference>
<dbReference type="PANTHER" id="PTHR11088:SF60">
    <property type="entry name" value="TRNA DIMETHYLALLYLTRANSFERASE"/>
    <property type="match status" value="1"/>
</dbReference>
<dbReference type="Pfam" id="PF01715">
    <property type="entry name" value="IPPT"/>
    <property type="match status" value="1"/>
</dbReference>
<dbReference type="SUPFAM" id="SSF52540">
    <property type="entry name" value="P-loop containing nucleoside triphosphate hydrolases"/>
    <property type="match status" value="2"/>
</dbReference>
<reference key="1">
    <citation type="journal article" date="2004" name="Proc. Natl. Acad. Sci. U.S.A.">
        <title>Structural flexibility in the Burkholderia mallei genome.</title>
        <authorList>
            <person name="Nierman W.C."/>
            <person name="DeShazer D."/>
            <person name="Kim H.S."/>
            <person name="Tettelin H."/>
            <person name="Nelson K.E."/>
            <person name="Feldblyum T.V."/>
            <person name="Ulrich R.L."/>
            <person name="Ronning C.M."/>
            <person name="Brinkac L.M."/>
            <person name="Daugherty S.C."/>
            <person name="Davidsen T.D."/>
            <person name="DeBoy R.T."/>
            <person name="Dimitrov G."/>
            <person name="Dodson R.J."/>
            <person name="Durkin A.S."/>
            <person name="Gwinn M.L."/>
            <person name="Haft D.H."/>
            <person name="Khouri H.M."/>
            <person name="Kolonay J.F."/>
            <person name="Madupu R."/>
            <person name="Mohammoud Y."/>
            <person name="Nelson W.C."/>
            <person name="Radune D."/>
            <person name="Romero C.M."/>
            <person name="Sarria S."/>
            <person name="Selengut J."/>
            <person name="Shamblin C."/>
            <person name="Sullivan S.A."/>
            <person name="White O."/>
            <person name="Yu Y."/>
            <person name="Zafar N."/>
            <person name="Zhou L."/>
            <person name="Fraser C.M."/>
        </authorList>
    </citation>
    <scope>NUCLEOTIDE SEQUENCE [LARGE SCALE GENOMIC DNA]</scope>
    <source>
        <strain>ATCC 23344</strain>
    </source>
</reference>
<organism>
    <name type="scientific">Burkholderia mallei (strain ATCC 23344)</name>
    <dbReference type="NCBI Taxonomy" id="243160"/>
    <lineage>
        <taxon>Bacteria</taxon>
        <taxon>Pseudomonadati</taxon>
        <taxon>Pseudomonadota</taxon>
        <taxon>Betaproteobacteria</taxon>
        <taxon>Burkholderiales</taxon>
        <taxon>Burkholderiaceae</taxon>
        <taxon>Burkholderia</taxon>
        <taxon>pseudomallei group</taxon>
    </lineage>
</organism>
<protein>
    <recommendedName>
        <fullName evidence="1">tRNA dimethylallyltransferase</fullName>
        <ecNumber evidence="1">2.5.1.75</ecNumber>
    </recommendedName>
    <alternativeName>
        <fullName evidence="1">Dimethylallyl diphosphate:tRNA dimethylallyltransferase</fullName>
        <shortName evidence="1">DMAPP:tRNA dimethylallyltransferase</shortName>
        <shortName evidence="1">DMATase</shortName>
    </alternativeName>
    <alternativeName>
        <fullName evidence="1">Isopentenyl-diphosphate:tRNA isopentenyltransferase</fullName>
        <shortName evidence="1">IPP transferase</shortName>
        <shortName evidence="1">IPPT</shortName>
        <shortName evidence="1">IPTase</shortName>
    </alternativeName>
</protein>
<comment type="function">
    <text evidence="1">Catalyzes the transfer of a dimethylallyl group onto the adenine at position 37 in tRNAs that read codons beginning with uridine, leading to the formation of N6-(dimethylallyl)adenosine (i(6)A).</text>
</comment>
<comment type="catalytic activity">
    <reaction evidence="1">
        <text>adenosine(37) in tRNA + dimethylallyl diphosphate = N(6)-dimethylallyladenosine(37) in tRNA + diphosphate</text>
        <dbReference type="Rhea" id="RHEA:26482"/>
        <dbReference type="Rhea" id="RHEA-COMP:10162"/>
        <dbReference type="Rhea" id="RHEA-COMP:10375"/>
        <dbReference type="ChEBI" id="CHEBI:33019"/>
        <dbReference type="ChEBI" id="CHEBI:57623"/>
        <dbReference type="ChEBI" id="CHEBI:74411"/>
        <dbReference type="ChEBI" id="CHEBI:74415"/>
        <dbReference type="EC" id="2.5.1.75"/>
    </reaction>
</comment>
<comment type="cofactor">
    <cofactor evidence="1">
        <name>Mg(2+)</name>
        <dbReference type="ChEBI" id="CHEBI:18420"/>
    </cofactor>
</comment>
<comment type="subunit">
    <text evidence="1">Monomer.</text>
</comment>
<comment type="similarity">
    <text evidence="1">Belongs to the IPP transferase family.</text>
</comment>